<comment type="function">
    <text evidence="1">Cell wall formation.</text>
</comment>
<comment type="catalytic activity">
    <reaction evidence="1">
        <text>UDP-N-acetyl-alpha-D-muramate + NADP(+) = UDP-N-acetyl-3-O-(1-carboxyvinyl)-alpha-D-glucosamine + NADPH + H(+)</text>
        <dbReference type="Rhea" id="RHEA:12248"/>
        <dbReference type="ChEBI" id="CHEBI:15378"/>
        <dbReference type="ChEBI" id="CHEBI:57783"/>
        <dbReference type="ChEBI" id="CHEBI:58349"/>
        <dbReference type="ChEBI" id="CHEBI:68483"/>
        <dbReference type="ChEBI" id="CHEBI:70757"/>
        <dbReference type="EC" id="1.3.1.98"/>
    </reaction>
</comment>
<comment type="cofactor">
    <cofactor evidence="1">
        <name>FAD</name>
        <dbReference type="ChEBI" id="CHEBI:57692"/>
    </cofactor>
</comment>
<comment type="pathway">
    <text evidence="1">Cell wall biogenesis; peptidoglycan biosynthesis.</text>
</comment>
<comment type="subcellular location">
    <subcellularLocation>
        <location evidence="1">Cytoplasm</location>
    </subcellularLocation>
</comment>
<comment type="similarity">
    <text evidence="1">Belongs to the MurB family.</text>
</comment>
<evidence type="ECO:0000255" key="1">
    <source>
        <dbReference type="HAMAP-Rule" id="MF_00037"/>
    </source>
</evidence>
<gene>
    <name evidence="1" type="primary">murB</name>
    <name type="ordered locus">BPP3497</name>
</gene>
<feature type="chain" id="PRO_0000179182" description="UDP-N-acetylenolpyruvoylglucosamine reductase">
    <location>
        <begin position="1"/>
        <end position="353"/>
    </location>
</feature>
<feature type="domain" description="FAD-binding PCMH-type" evidence="1">
    <location>
        <begin position="31"/>
        <end position="201"/>
    </location>
</feature>
<feature type="active site" evidence="1">
    <location>
        <position position="177"/>
    </location>
</feature>
<feature type="active site" description="Proton donor" evidence="1">
    <location>
        <position position="250"/>
    </location>
</feature>
<feature type="active site" evidence="1">
    <location>
        <position position="346"/>
    </location>
</feature>
<name>MURB_BORPA</name>
<keyword id="KW-0131">Cell cycle</keyword>
<keyword id="KW-0132">Cell division</keyword>
<keyword id="KW-0133">Cell shape</keyword>
<keyword id="KW-0961">Cell wall biogenesis/degradation</keyword>
<keyword id="KW-0963">Cytoplasm</keyword>
<keyword id="KW-0274">FAD</keyword>
<keyword id="KW-0285">Flavoprotein</keyword>
<keyword id="KW-0521">NADP</keyword>
<keyword id="KW-0560">Oxidoreductase</keyword>
<keyword id="KW-0573">Peptidoglycan synthesis</keyword>
<organism>
    <name type="scientific">Bordetella parapertussis (strain 12822 / ATCC BAA-587 / NCTC 13253)</name>
    <dbReference type="NCBI Taxonomy" id="257311"/>
    <lineage>
        <taxon>Bacteria</taxon>
        <taxon>Pseudomonadati</taxon>
        <taxon>Pseudomonadota</taxon>
        <taxon>Betaproteobacteria</taxon>
        <taxon>Burkholderiales</taxon>
        <taxon>Alcaligenaceae</taxon>
        <taxon>Bordetella</taxon>
    </lineage>
</organism>
<protein>
    <recommendedName>
        <fullName evidence="1">UDP-N-acetylenolpyruvoylglucosamine reductase</fullName>
        <ecNumber evidence="1">1.3.1.98</ecNumber>
    </recommendedName>
    <alternativeName>
        <fullName evidence="1">UDP-N-acetylmuramate dehydrogenase</fullName>
    </alternativeName>
</protein>
<sequence length="353" mass="37529">MSMSTVPACIEPVAPLAPQAQDLRCFNTLGLASHAPAFVALTEPSQLPALSALAPRFRQLVVLGGGSNVVLPASIDGLVAQVRLPGVRLVGQCADAWVVEAAAGENWHGFVTACVDNGWDGLENLALIPGTVGAAPVQNIGAYGVELADRFHSLTAWDVKGGRWVEMGAAECRFAYRDSFFKHQEPGAWVIGSVRFALPRPWQPVLDYPDLQRHAALDGAAPTARAVYDAVCAIRRAKLPDPAVVGNAGSFFKNPLVDAGTRQALLGRFPGLVSYPQPDGRYKLAAGWLIDQCGWKGRQLGAAGVHDRQALVLVNRGGAQARDIMALAAAIQGDVERRYGVRLEPEPVVVPAR</sequence>
<accession>Q7W509</accession>
<reference key="1">
    <citation type="journal article" date="2003" name="Nat. Genet.">
        <title>Comparative analysis of the genome sequences of Bordetella pertussis, Bordetella parapertussis and Bordetella bronchiseptica.</title>
        <authorList>
            <person name="Parkhill J."/>
            <person name="Sebaihia M."/>
            <person name="Preston A."/>
            <person name="Murphy L.D."/>
            <person name="Thomson N.R."/>
            <person name="Harris D.E."/>
            <person name="Holden M.T.G."/>
            <person name="Churcher C.M."/>
            <person name="Bentley S.D."/>
            <person name="Mungall K.L."/>
            <person name="Cerdeno-Tarraga A.-M."/>
            <person name="Temple L."/>
            <person name="James K.D."/>
            <person name="Harris B."/>
            <person name="Quail M.A."/>
            <person name="Achtman M."/>
            <person name="Atkin R."/>
            <person name="Baker S."/>
            <person name="Basham D."/>
            <person name="Bason N."/>
            <person name="Cherevach I."/>
            <person name="Chillingworth T."/>
            <person name="Collins M."/>
            <person name="Cronin A."/>
            <person name="Davis P."/>
            <person name="Doggett J."/>
            <person name="Feltwell T."/>
            <person name="Goble A."/>
            <person name="Hamlin N."/>
            <person name="Hauser H."/>
            <person name="Holroyd S."/>
            <person name="Jagels K."/>
            <person name="Leather S."/>
            <person name="Moule S."/>
            <person name="Norberczak H."/>
            <person name="O'Neil S."/>
            <person name="Ormond D."/>
            <person name="Price C."/>
            <person name="Rabbinowitsch E."/>
            <person name="Rutter S."/>
            <person name="Sanders M."/>
            <person name="Saunders D."/>
            <person name="Seeger K."/>
            <person name="Sharp S."/>
            <person name="Simmonds M."/>
            <person name="Skelton J."/>
            <person name="Squares R."/>
            <person name="Squares S."/>
            <person name="Stevens K."/>
            <person name="Unwin L."/>
            <person name="Whitehead S."/>
            <person name="Barrell B.G."/>
            <person name="Maskell D.J."/>
        </authorList>
    </citation>
    <scope>NUCLEOTIDE SEQUENCE [LARGE SCALE GENOMIC DNA]</scope>
    <source>
        <strain>12822 / ATCC BAA-587 / NCTC 13253</strain>
    </source>
</reference>
<dbReference type="EC" id="1.3.1.98" evidence="1"/>
<dbReference type="EMBL" id="BX640433">
    <property type="protein sequence ID" value="CAE38781.1"/>
    <property type="molecule type" value="Genomic_DNA"/>
</dbReference>
<dbReference type="SMR" id="Q7W509"/>
<dbReference type="KEGG" id="bpa:BPP3497"/>
<dbReference type="HOGENOM" id="CLU_035304_0_0_4"/>
<dbReference type="UniPathway" id="UPA00219"/>
<dbReference type="Proteomes" id="UP000001421">
    <property type="component" value="Chromosome"/>
</dbReference>
<dbReference type="GO" id="GO:0005829">
    <property type="term" value="C:cytosol"/>
    <property type="evidence" value="ECO:0007669"/>
    <property type="project" value="TreeGrafter"/>
</dbReference>
<dbReference type="GO" id="GO:0071949">
    <property type="term" value="F:FAD binding"/>
    <property type="evidence" value="ECO:0007669"/>
    <property type="project" value="InterPro"/>
</dbReference>
<dbReference type="GO" id="GO:0008762">
    <property type="term" value="F:UDP-N-acetylmuramate dehydrogenase activity"/>
    <property type="evidence" value="ECO:0007669"/>
    <property type="project" value="UniProtKB-UniRule"/>
</dbReference>
<dbReference type="GO" id="GO:0051301">
    <property type="term" value="P:cell division"/>
    <property type="evidence" value="ECO:0007669"/>
    <property type="project" value="UniProtKB-KW"/>
</dbReference>
<dbReference type="GO" id="GO:0071555">
    <property type="term" value="P:cell wall organization"/>
    <property type="evidence" value="ECO:0007669"/>
    <property type="project" value="UniProtKB-KW"/>
</dbReference>
<dbReference type="GO" id="GO:0009252">
    <property type="term" value="P:peptidoglycan biosynthetic process"/>
    <property type="evidence" value="ECO:0007669"/>
    <property type="project" value="UniProtKB-UniRule"/>
</dbReference>
<dbReference type="GO" id="GO:0008360">
    <property type="term" value="P:regulation of cell shape"/>
    <property type="evidence" value="ECO:0007669"/>
    <property type="project" value="UniProtKB-KW"/>
</dbReference>
<dbReference type="Gene3D" id="3.30.465.10">
    <property type="match status" value="1"/>
</dbReference>
<dbReference type="Gene3D" id="3.90.78.10">
    <property type="entry name" value="UDP-N-acetylenolpyruvoylglucosamine reductase, C-terminal domain"/>
    <property type="match status" value="1"/>
</dbReference>
<dbReference type="Gene3D" id="3.30.43.10">
    <property type="entry name" value="Uridine Diphospho-n-acetylenolpyruvylglucosamine Reductase, domain 2"/>
    <property type="match status" value="1"/>
</dbReference>
<dbReference type="HAMAP" id="MF_00037">
    <property type="entry name" value="MurB"/>
    <property type="match status" value="1"/>
</dbReference>
<dbReference type="InterPro" id="IPR016166">
    <property type="entry name" value="FAD-bd_PCMH"/>
</dbReference>
<dbReference type="InterPro" id="IPR036318">
    <property type="entry name" value="FAD-bd_PCMH-like_sf"/>
</dbReference>
<dbReference type="InterPro" id="IPR016167">
    <property type="entry name" value="FAD-bd_PCMH_sub1"/>
</dbReference>
<dbReference type="InterPro" id="IPR016169">
    <property type="entry name" value="FAD-bd_PCMH_sub2"/>
</dbReference>
<dbReference type="InterPro" id="IPR003170">
    <property type="entry name" value="MurB"/>
</dbReference>
<dbReference type="InterPro" id="IPR011601">
    <property type="entry name" value="MurB_C"/>
</dbReference>
<dbReference type="InterPro" id="IPR036635">
    <property type="entry name" value="MurB_C_sf"/>
</dbReference>
<dbReference type="InterPro" id="IPR006094">
    <property type="entry name" value="Oxid_FAD_bind_N"/>
</dbReference>
<dbReference type="NCBIfam" id="TIGR00179">
    <property type="entry name" value="murB"/>
    <property type="match status" value="1"/>
</dbReference>
<dbReference type="NCBIfam" id="NF000755">
    <property type="entry name" value="PRK00046.1"/>
    <property type="match status" value="1"/>
</dbReference>
<dbReference type="PANTHER" id="PTHR21071">
    <property type="entry name" value="UDP-N-ACETYLENOLPYRUVOYLGLUCOSAMINE REDUCTASE"/>
    <property type="match status" value="1"/>
</dbReference>
<dbReference type="PANTHER" id="PTHR21071:SF4">
    <property type="entry name" value="UDP-N-ACETYLENOLPYRUVOYLGLUCOSAMINE REDUCTASE"/>
    <property type="match status" value="1"/>
</dbReference>
<dbReference type="Pfam" id="PF01565">
    <property type="entry name" value="FAD_binding_4"/>
    <property type="match status" value="1"/>
</dbReference>
<dbReference type="Pfam" id="PF02873">
    <property type="entry name" value="MurB_C"/>
    <property type="match status" value="1"/>
</dbReference>
<dbReference type="SUPFAM" id="SSF56176">
    <property type="entry name" value="FAD-binding/transporter-associated domain-like"/>
    <property type="match status" value="1"/>
</dbReference>
<dbReference type="SUPFAM" id="SSF56194">
    <property type="entry name" value="Uridine diphospho-N-Acetylenolpyruvylglucosamine reductase, MurB, C-terminal domain"/>
    <property type="match status" value="1"/>
</dbReference>
<dbReference type="PROSITE" id="PS51387">
    <property type="entry name" value="FAD_PCMH"/>
    <property type="match status" value="1"/>
</dbReference>
<proteinExistence type="inferred from homology"/>